<feature type="chain" id="PRO_1000121244" description="DNA-directed RNA polymerase subunit omega">
    <location>
        <begin position="1"/>
        <end position="136"/>
    </location>
</feature>
<name>RPOZ_METEP</name>
<protein>
    <recommendedName>
        <fullName evidence="1">DNA-directed RNA polymerase subunit omega</fullName>
        <shortName evidence="1">RNAP omega subunit</shortName>
        <ecNumber evidence="1">2.7.7.6</ecNumber>
    </recommendedName>
    <alternativeName>
        <fullName evidence="1">RNA polymerase omega subunit</fullName>
    </alternativeName>
    <alternativeName>
        <fullName evidence="1">Transcriptase subunit omega</fullName>
    </alternativeName>
</protein>
<accession>A9VYZ2</accession>
<comment type="function">
    <text evidence="1">Promotes RNA polymerase assembly. Latches the N- and C-terminal regions of the beta' subunit thereby facilitating its interaction with the beta and alpha subunits.</text>
</comment>
<comment type="catalytic activity">
    <reaction evidence="1">
        <text>RNA(n) + a ribonucleoside 5'-triphosphate = RNA(n+1) + diphosphate</text>
        <dbReference type="Rhea" id="RHEA:21248"/>
        <dbReference type="Rhea" id="RHEA-COMP:14527"/>
        <dbReference type="Rhea" id="RHEA-COMP:17342"/>
        <dbReference type="ChEBI" id="CHEBI:33019"/>
        <dbReference type="ChEBI" id="CHEBI:61557"/>
        <dbReference type="ChEBI" id="CHEBI:140395"/>
        <dbReference type="EC" id="2.7.7.6"/>
    </reaction>
</comment>
<comment type="subunit">
    <text evidence="1">The RNAP catalytic core consists of 2 alpha, 1 beta, 1 beta' and 1 omega subunit. When a sigma factor is associated with the core the holoenzyme is formed, which can initiate transcription.</text>
</comment>
<comment type="similarity">
    <text evidence="1">Belongs to the RNA polymerase subunit omega family.</text>
</comment>
<reference key="1">
    <citation type="submission" date="2007-12" db="EMBL/GenBank/DDBJ databases">
        <title>Complete sequence of Methylobacterium extorquens PA1.</title>
        <authorList>
            <consortium name="US DOE Joint Genome Institute"/>
            <person name="Copeland A."/>
            <person name="Lucas S."/>
            <person name="Lapidus A."/>
            <person name="Barry K."/>
            <person name="Glavina del Rio T."/>
            <person name="Dalin E."/>
            <person name="Tice H."/>
            <person name="Pitluck S."/>
            <person name="Saunders E."/>
            <person name="Brettin T."/>
            <person name="Bruce D."/>
            <person name="Detter J.C."/>
            <person name="Han C."/>
            <person name="Schmutz J."/>
            <person name="Larimer F."/>
            <person name="Land M."/>
            <person name="Hauser L."/>
            <person name="Kyrpides N."/>
            <person name="Kim E."/>
            <person name="Marx C."/>
            <person name="Richardson P."/>
        </authorList>
    </citation>
    <scope>NUCLEOTIDE SEQUENCE [LARGE SCALE GENOMIC DNA]</scope>
    <source>
        <strain>PA1</strain>
    </source>
</reference>
<evidence type="ECO:0000255" key="1">
    <source>
        <dbReference type="HAMAP-Rule" id="MF_00366"/>
    </source>
</evidence>
<organism>
    <name type="scientific">Methylorubrum extorquens (strain PA1)</name>
    <name type="common">Methylobacterium extorquens</name>
    <dbReference type="NCBI Taxonomy" id="419610"/>
    <lineage>
        <taxon>Bacteria</taxon>
        <taxon>Pseudomonadati</taxon>
        <taxon>Pseudomonadota</taxon>
        <taxon>Alphaproteobacteria</taxon>
        <taxon>Hyphomicrobiales</taxon>
        <taxon>Methylobacteriaceae</taxon>
        <taxon>Methylorubrum</taxon>
    </lineage>
</organism>
<sequence length="136" mass="14990">MARVTVEDCIEKVENRFELVLLASHRARLLAAGAPLTVERDRDKNPVVALREIGDETITAEDLKEQLIHSMQKYVEVDEPEAETVPLLSSSPAAAAVAPQSSSDDKNVQFDFMSEEDLLRGLENLAPPTETDDEGE</sequence>
<proteinExistence type="inferred from homology"/>
<gene>
    <name evidence="1" type="primary">rpoZ</name>
    <name type="ordered locus">Mext_3197</name>
</gene>
<dbReference type="EC" id="2.7.7.6" evidence="1"/>
<dbReference type="EMBL" id="CP000908">
    <property type="protein sequence ID" value="ABY31584.1"/>
    <property type="molecule type" value="Genomic_DNA"/>
</dbReference>
<dbReference type="RefSeq" id="WP_003602879.1">
    <property type="nucleotide sequence ID" value="NC_010172.1"/>
</dbReference>
<dbReference type="SMR" id="A9VYZ2"/>
<dbReference type="GeneID" id="72990842"/>
<dbReference type="KEGG" id="mex:Mext_3197"/>
<dbReference type="eggNOG" id="COG1758">
    <property type="taxonomic scope" value="Bacteria"/>
</dbReference>
<dbReference type="HOGENOM" id="CLU_125406_2_0_5"/>
<dbReference type="BioCyc" id="MEXT419610:MEXT_RS16070-MONOMER"/>
<dbReference type="GO" id="GO:0000428">
    <property type="term" value="C:DNA-directed RNA polymerase complex"/>
    <property type="evidence" value="ECO:0007669"/>
    <property type="project" value="UniProtKB-KW"/>
</dbReference>
<dbReference type="GO" id="GO:0003677">
    <property type="term" value="F:DNA binding"/>
    <property type="evidence" value="ECO:0007669"/>
    <property type="project" value="UniProtKB-UniRule"/>
</dbReference>
<dbReference type="GO" id="GO:0003899">
    <property type="term" value="F:DNA-directed RNA polymerase activity"/>
    <property type="evidence" value="ECO:0007669"/>
    <property type="project" value="UniProtKB-UniRule"/>
</dbReference>
<dbReference type="GO" id="GO:0006351">
    <property type="term" value="P:DNA-templated transcription"/>
    <property type="evidence" value="ECO:0007669"/>
    <property type="project" value="UniProtKB-UniRule"/>
</dbReference>
<dbReference type="Gene3D" id="3.90.940.10">
    <property type="match status" value="1"/>
</dbReference>
<dbReference type="HAMAP" id="MF_00366">
    <property type="entry name" value="RNApol_bact_RpoZ"/>
    <property type="match status" value="1"/>
</dbReference>
<dbReference type="InterPro" id="IPR003716">
    <property type="entry name" value="DNA-dir_RNA_pol_omega"/>
</dbReference>
<dbReference type="InterPro" id="IPR006110">
    <property type="entry name" value="Pol_omega/Rpo6/RPB6"/>
</dbReference>
<dbReference type="InterPro" id="IPR036161">
    <property type="entry name" value="RPB6/omega-like_sf"/>
</dbReference>
<dbReference type="NCBIfam" id="TIGR00690">
    <property type="entry name" value="rpoZ"/>
    <property type="match status" value="1"/>
</dbReference>
<dbReference type="PANTHER" id="PTHR34476">
    <property type="entry name" value="DNA-DIRECTED RNA POLYMERASE SUBUNIT OMEGA"/>
    <property type="match status" value="1"/>
</dbReference>
<dbReference type="PANTHER" id="PTHR34476:SF1">
    <property type="entry name" value="DNA-DIRECTED RNA POLYMERASE SUBUNIT OMEGA"/>
    <property type="match status" value="1"/>
</dbReference>
<dbReference type="Pfam" id="PF01192">
    <property type="entry name" value="RNA_pol_Rpb6"/>
    <property type="match status" value="1"/>
</dbReference>
<dbReference type="SMART" id="SM01409">
    <property type="entry name" value="RNA_pol_Rpb6"/>
    <property type="match status" value="1"/>
</dbReference>
<dbReference type="SUPFAM" id="SSF63562">
    <property type="entry name" value="RPB6/omega subunit-like"/>
    <property type="match status" value="1"/>
</dbReference>
<keyword id="KW-0240">DNA-directed RNA polymerase</keyword>
<keyword id="KW-0548">Nucleotidyltransferase</keyword>
<keyword id="KW-0804">Transcription</keyword>
<keyword id="KW-0808">Transferase</keyword>